<evidence type="ECO:0000255" key="1">
    <source>
        <dbReference type="HAMAP-Rule" id="MF_00017"/>
    </source>
</evidence>
<feature type="chain" id="PRO_1000089730" description="Recombination protein RecR">
    <location>
        <begin position="1"/>
        <end position="200"/>
    </location>
</feature>
<feature type="domain" description="Toprim" evidence="1">
    <location>
        <begin position="83"/>
        <end position="177"/>
    </location>
</feature>
<feature type="zinc finger region" description="C4-type" evidence="1">
    <location>
        <begin position="60"/>
        <end position="75"/>
    </location>
</feature>
<reference key="1">
    <citation type="journal article" date="2009" name="PLoS Pathog.">
        <title>Molecular evolutionary consequences of niche restriction in Francisella tularensis, a facultative intracellular pathogen.</title>
        <authorList>
            <person name="Larsson P."/>
            <person name="Elfsmark D."/>
            <person name="Svensson K."/>
            <person name="Wikstroem P."/>
            <person name="Forsman M."/>
            <person name="Brettin T."/>
            <person name="Keim P."/>
            <person name="Johansson A."/>
        </authorList>
    </citation>
    <scope>NUCLEOTIDE SEQUENCE [LARGE SCALE GENOMIC DNA]</scope>
    <source>
        <strain>FSC147</strain>
    </source>
</reference>
<name>RECR_FRATM</name>
<sequence>MTSKIFSPKISAVIESLRKLPTIGKKSSQRLALYLLDKSPETAIAIANSLLDATANIKKCVYCQALTEDDVCNICSNTNRDDTKLCIIESMLDMIAIEEAGIYRGKYFVLNGRISPLDGIGPSELKLNILQQIIADRKIDEVILAISPTVEGETTAHFISQMIVKDIKISRIGFGVPFGGELEYLDQQTLLHAFNARTNI</sequence>
<keyword id="KW-0227">DNA damage</keyword>
<keyword id="KW-0233">DNA recombination</keyword>
<keyword id="KW-0234">DNA repair</keyword>
<keyword id="KW-0479">Metal-binding</keyword>
<keyword id="KW-0862">Zinc</keyword>
<keyword id="KW-0863">Zinc-finger</keyword>
<proteinExistence type="inferred from homology"/>
<protein>
    <recommendedName>
        <fullName evidence="1">Recombination protein RecR</fullName>
    </recommendedName>
</protein>
<dbReference type="EMBL" id="CP000915">
    <property type="protein sequence ID" value="ACD30938.1"/>
    <property type="molecule type" value="Genomic_DNA"/>
</dbReference>
<dbReference type="SMR" id="B2SGT0"/>
<dbReference type="KEGG" id="ftm:FTM_1024"/>
<dbReference type="HOGENOM" id="CLU_060739_1_2_6"/>
<dbReference type="GO" id="GO:0003677">
    <property type="term" value="F:DNA binding"/>
    <property type="evidence" value="ECO:0007669"/>
    <property type="project" value="UniProtKB-UniRule"/>
</dbReference>
<dbReference type="GO" id="GO:0008270">
    <property type="term" value="F:zinc ion binding"/>
    <property type="evidence" value="ECO:0007669"/>
    <property type="project" value="UniProtKB-KW"/>
</dbReference>
<dbReference type="GO" id="GO:0006310">
    <property type="term" value="P:DNA recombination"/>
    <property type="evidence" value="ECO:0007669"/>
    <property type="project" value="UniProtKB-UniRule"/>
</dbReference>
<dbReference type="GO" id="GO:0006281">
    <property type="term" value="P:DNA repair"/>
    <property type="evidence" value="ECO:0007669"/>
    <property type="project" value="UniProtKB-UniRule"/>
</dbReference>
<dbReference type="CDD" id="cd01025">
    <property type="entry name" value="TOPRIM_recR"/>
    <property type="match status" value="1"/>
</dbReference>
<dbReference type="Gene3D" id="3.40.1360.10">
    <property type="match status" value="1"/>
</dbReference>
<dbReference type="Gene3D" id="6.10.250.240">
    <property type="match status" value="1"/>
</dbReference>
<dbReference type="Gene3D" id="1.10.8.420">
    <property type="entry name" value="RecR Domain 1"/>
    <property type="match status" value="1"/>
</dbReference>
<dbReference type="HAMAP" id="MF_00017">
    <property type="entry name" value="RecR"/>
    <property type="match status" value="1"/>
</dbReference>
<dbReference type="InterPro" id="IPR000093">
    <property type="entry name" value="DNA_Rcmb_RecR"/>
</dbReference>
<dbReference type="InterPro" id="IPR023627">
    <property type="entry name" value="Rcmb_RecR"/>
</dbReference>
<dbReference type="InterPro" id="IPR015967">
    <property type="entry name" value="Rcmb_RecR_Znf"/>
</dbReference>
<dbReference type="InterPro" id="IPR006171">
    <property type="entry name" value="TOPRIM_dom"/>
</dbReference>
<dbReference type="InterPro" id="IPR034137">
    <property type="entry name" value="TOPRIM_RecR"/>
</dbReference>
<dbReference type="NCBIfam" id="TIGR00615">
    <property type="entry name" value="recR"/>
    <property type="match status" value="1"/>
</dbReference>
<dbReference type="PANTHER" id="PTHR30446">
    <property type="entry name" value="RECOMBINATION PROTEIN RECR"/>
    <property type="match status" value="1"/>
</dbReference>
<dbReference type="PANTHER" id="PTHR30446:SF0">
    <property type="entry name" value="RECOMBINATION PROTEIN RECR"/>
    <property type="match status" value="1"/>
</dbReference>
<dbReference type="Pfam" id="PF21175">
    <property type="entry name" value="RecR_C"/>
    <property type="match status" value="1"/>
</dbReference>
<dbReference type="Pfam" id="PF21176">
    <property type="entry name" value="RecR_HhH"/>
    <property type="match status" value="1"/>
</dbReference>
<dbReference type="Pfam" id="PF02132">
    <property type="entry name" value="RecR_ZnF"/>
    <property type="match status" value="1"/>
</dbReference>
<dbReference type="Pfam" id="PF13662">
    <property type="entry name" value="Toprim_4"/>
    <property type="match status" value="1"/>
</dbReference>
<dbReference type="SMART" id="SM00493">
    <property type="entry name" value="TOPRIM"/>
    <property type="match status" value="1"/>
</dbReference>
<dbReference type="SUPFAM" id="SSF111304">
    <property type="entry name" value="Recombination protein RecR"/>
    <property type="match status" value="1"/>
</dbReference>
<dbReference type="PROSITE" id="PS01300">
    <property type="entry name" value="RECR"/>
    <property type="match status" value="1"/>
</dbReference>
<dbReference type="PROSITE" id="PS50880">
    <property type="entry name" value="TOPRIM"/>
    <property type="match status" value="1"/>
</dbReference>
<organism>
    <name type="scientific">Francisella tularensis subsp. mediasiatica (strain FSC147)</name>
    <dbReference type="NCBI Taxonomy" id="441952"/>
    <lineage>
        <taxon>Bacteria</taxon>
        <taxon>Pseudomonadati</taxon>
        <taxon>Pseudomonadota</taxon>
        <taxon>Gammaproteobacteria</taxon>
        <taxon>Thiotrichales</taxon>
        <taxon>Francisellaceae</taxon>
        <taxon>Francisella</taxon>
    </lineage>
</organism>
<accession>B2SGT0</accession>
<comment type="function">
    <text evidence="1">May play a role in DNA repair. It seems to be involved in an RecBC-independent recombinational process of DNA repair. It may act with RecF and RecO.</text>
</comment>
<comment type="similarity">
    <text evidence="1">Belongs to the RecR family.</text>
</comment>
<gene>
    <name evidence="1" type="primary">recR</name>
    <name type="ordered locus">FTM_1024</name>
</gene>